<accession>P55969</accession>
<reference key="1">
    <citation type="journal article" date="1997" name="Nature">
        <title>The complete genome sequence of the gastric pathogen Helicobacter pylori.</title>
        <authorList>
            <person name="Tomb J.-F."/>
            <person name="White O."/>
            <person name="Kerlavage A.R."/>
            <person name="Clayton R.A."/>
            <person name="Sutton G.G."/>
            <person name="Fleischmann R.D."/>
            <person name="Ketchum K.A."/>
            <person name="Klenk H.-P."/>
            <person name="Gill S.R."/>
            <person name="Dougherty B.A."/>
            <person name="Nelson K.E."/>
            <person name="Quackenbush J."/>
            <person name="Zhou L."/>
            <person name="Kirkness E.F."/>
            <person name="Peterson S.N."/>
            <person name="Loftus B.J."/>
            <person name="Richardson D.L."/>
            <person name="Dodson R.J."/>
            <person name="Khalak H.G."/>
            <person name="Glodek A."/>
            <person name="McKenney K."/>
            <person name="FitzGerald L.M."/>
            <person name="Lee N."/>
            <person name="Adams M.D."/>
            <person name="Hickey E.K."/>
            <person name="Berg D.E."/>
            <person name="Gocayne J.D."/>
            <person name="Utterback T.R."/>
            <person name="Peterson J.D."/>
            <person name="Kelley J.M."/>
            <person name="Cotton M.D."/>
            <person name="Weidman J.F."/>
            <person name="Fujii C."/>
            <person name="Bowman C."/>
            <person name="Watthey L."/>
            <person name="Wallin E."/>
            <person name="Hayes W.S."/>
            <person name="Borodovsky M."/>
            <person name="Karp P.D."/>
            <person name="Smith H.O."/>
            <person name="Fraser C.M."/>
            <person name="Venter J.C."/>
        </authorList>
    </citation>
    <scope>NUCLEOTIDE SEQUENCE [LARGE SCALE GENOMIC DNA]</scope>
    <source>
        <strain>ATCC 700392 / 26695</strain>
    </source>
</reference>
<keyword id="KW-0002">3D-structure</keyword>
<keyword id="KW-0998">Cell outer membrane</keyword>
<keyword id="KW-0449">Lipoprotein</keyword>
<keyword id="KW-0472">Membrane</keyword>
<keyword id="KW-0564">Palmitate</keyword>
<keyword id="KW-1185">Reference proteome</keyword>
<keyword id="KW-0732">Signal</keyword>
<name>HPAA_HELPY</name>
<organism>
    <name type="scientific">Helicobacter pylori (strain ATCC 700392 / 26695)</name>
    <name type="common">Campylobacter pylori</name>
    <dbReference type="NCBI Taxonomy" id="85962"/>
    <lineage>
        <taxon>Bacteria</taxon>
        <taxon>Pseudomonadati</taxon>
        <taxon>Campylobacterota</taxon>
        <taxon>Epsilonproteobacteria</taxon>
        <taxon>Campylobacterales</taxon>
        <taxon>Helicobacteraceae</taxon>
        <taxon>Helicobacter</taxon>
    </lineage>
</organism>
<proteinExistence type="evidence at protein level"/>
<evidence type="ECO:0000255" key="1">
    <source>
        <dbReference type="PROSITE-ProRule" id="PRU00303"/>
    </source>
</evidence>
<evidence type="ECO:0000305" key="2"/>
<protein>
    <recommendedName>
        <fullName>Neuraminyllactose-binding hemagglutinin</fullName>
    </recommendedName>
    <alternativeName>
        <fullName>Flagellar sheath adhesin</fullName>
    </alternativeName>
    <alternativeName>
        <fullName>N-acetylneuraminyllactose-binding fibrillar hemagglutinin receptor-binding subunit</fullName>
        <shortName>NLBH</shortName>
    </alternativeName>
</protein>
<feature type="signal peptide" evidence="1">
    <location>
        <begin position="1"/>
        <end position="27"/>
    </location>
</feature>
<feature type="chain" id="PRO_0000018100" description="Neuraminyllactose-binding hemagglutinin">
    <location>
        <begin position="28"/>
        <end position="260"/>
    </location>
</feature>
<feature type="lipid moiety-binding region" description="N-palmitoyl cysteine" evidence="2">
    <location>
        <position position="28"/>
    </location>
</feature>
<feature type="lipid moiety-binding region" description="S-diacylglycerol cysteine" evidence="2">
    <location>
        <position position="28"/>
    </location>
</feature>
<sequence>MKANNHFKDFAWKKCLLGASVVALLVGCSPHIIETNEVALKLNYHPASEKVQALDEKILLLRPAFQYSDNIAKEYENKFKNQTALKVEQILQNQGYKVISVDSSDKDDLSFSQKKEGYLAVAMNGEIVLRPDPKRTIQKKSEPGLLFSTGLDKMEGVLIPAGFVKVTILEPMSGESLDSFTMDLSELDIQEKFLKTTHSSHSGGLVSTMVKGTDNSNDAIKSALNKIFANIMQEIDKKLTQKNLESYQKDAKELKGKRNR</sequence>
<dbReference type="EMBL" id="AE000511">
    <property type="protein sequence ID" value="AAD07844.1"/>
    <property type="molecule type" value="Genomic_DNA"/>
</dbReference>
<dbReference type="PIR" id="E64619">
    <property type="entry name" value="E64619"/>
</dbReference>
<dbReference type="RefSeq" id="NP_207590.1">
    <property type="nucleotide sequence ID" value="NC_000915.1"/>
</dbReference>
<dbReference type="RefSeq" id="WP_000646667.1">
    <property type="nucleotide sequence ID" value="NC_018939.1"/>
</dbReference>
<dbReference type="PDB" id="8T8D">
    <property type="method" value="X-ray"/>
    <property type="resolution" value="2.90 A"/>
    <property type="chains" value="A/B/C/D=52-260"/>
</dbReference>
<dbReference type="PDBsum" id="8T8D"/>
<dbReference type="SMR" id="P55969"/>
<dbReference type="DIP" id="DIP-3518N"/>
<dbReference type="IntAct" id="P55969">
    <property type="interactions" value="7"/>
</dbReference>
<dbReference type="MINT" id="P55969"/>
<dbReference type="STRING" id="85962.HP_0797"/>
<dbReference type="PaxDb" id="85962-C694_04085"/>
<dbReference type="EnsemblBacteria" id="AAD07844">
    <property type="protein sequence ID" value="AAD07844"/>
    <property type="gene ID" value="HP_0797"/>
</dbReference>
<dbReference type="KEGG" id="heo:C694_04085"/>
<dbReference type="KEGG" id="hpy:HP_0797"/>
<dbReference type="PATRIC" id="fig|85962.47.peg.849"/>
<dbReference type="InParanoid" id="P55969"/>
<dbReference type="OrthoDB" id="5328461at2"/>
<dbReference type="PhylomeDB" id="P55969"/>
<dbReference type="Proteomes" id="UP000000429">
    <property type="component" value="Chromosome"/>
</dbReference>
<dbReference type="GO" id="GO:0009279">
    <property type="term" value="C:cell outer membrane"/>
    <property type="evidence" value="ECO:0007669"/>
    <property type="project" value="UniProtKB-SubCell"/>
</dbReference>
<dbReference type="Gene3D" id="3.30.160.180">
    <property type="entry name" value="Putative neuraminyllactose-binding hemagglutinin homolog like domain"/>
    <property type="match status" value="1"/>
</dbReference>
<dbReference type="InterPro" id="IPR007876">
    <property type="entry name" value="NeuraminylLac-bd_hemagglutn"/>
</dbReference>
<dbReference type="InterPro" id="IPR038531">
    <property type="entry name" value="NeuraminylLac-bd_hemagglutn_sf"/>
</dbReference>
<dbReference type="Pfam" id="PF05211">
    <property type="entry name" value="NLBH"/>
    <property type="match status" value="1"/>
</dbReference>
<dbReference type="PIRSF" id="PIRSF019714">
    <property type="entry name" value="Neuraminyllac-bd_haemagglutn"/>
    <property type="match status" value="1"/>
</dbReference>
<dbReference type="SUPFAM" id="SSF159594">
    <property type="entry name" value="XCC0632-like"/>
    <property type="match status" value="1"/>
</dbReference>
<dbReference type="PROSITE" id="PS51257">
    <property type="entry name" value="PROKAR_LIPOPROTEIN"/>
    <property type="match status" value="1"/>
</dbReference>
<gene>
    <name type="primary">hpaA</name>
    <name type="ordered locus">HP_0797</name>
</gene>
<comment type="subcellular location">
    <subcellularLocation>
        <location evidence="2">Cell outer membrane</location>
        <topology evidence="2">Lipid-anchor</topology>
    </subcellularLocation>
</comment>